<accession>Q8UHX4</accession>
<comment type="function">
    <text evidence="1">One of the essential components for the initiation of protein synthesis. Stabilizes the binding of IF-2 and IF-3 on the 30S subunit to which N-formylmethionyl-tRNA(fMet) subsequently binds. Helps modulate mRNA selection, yielding the 30S pre-initiation complex (PIC). Upon addition of the 50S ribosomal subunit IF-1, IF-2 and IF-3 are released leaving the mature 70S translation initiation complex.</text>
</comment>
<comment type="subunit">
    <text evidence="1">Component of the 30S ribosomal translation pre-initiation complex which assembles on the 30S ribosome in the order IF-2 and IF-3, IF-1 and N-formylmethionyl-tRNA(fMet); mRNA recruitment can occur at any time during PIC assembly.</text>
</comment>
<comment type="subcellular location">
    <subcellularLocation>
        <location evidence="1">Cytoplasm</location>
    </subcellularLocation>
</comment>
<comment type="similarity">
    <text evidence="1">Belongs to the IF-1 family.</text>
</comment>
<comment type="sequence caution" evidence="2">
    <conflict type="erroneous initiation">
        <sequence resource="EMBL-CDS" id="AAK86348"/>
    </conflict>
    <text>Extended N-terminus.</text>
</comment>
<reference key="1">
    <citation type="journal article" date="2001" name="Science">
        <title>The genome of the natural genetic engineer Agrobacterium tumefaciens C58.</title>
        <authorList>
            <person name="Wood D.W."/>
            <person name="Setubal J.C."/>
            <person name="Kaul R."/>
            <person name="Monks D.E."/>
            <person name="Kitajima J.P."/>
            <person name="Okura V.K."/>
            <person name="Zhou Y."/>
            <person name="Chen L."/>
            <person name="Wood G.E."/>
            <person name="Almeida N.F. Jr."/>
            <person name="Woo L."/>
            <person name="Chen Y."/>
            <person name="Paulsen I.T."/>
            <person name="Eisen J.A."/>
            <person name="Karp P.D."/>
            <person name="Bovee D. Sr."/>
            <person name="Chapman P."/>
            <person name="Clendenning J."/>
            <person name="Deatherage G."/>
            <person name="Gillet W."/>
            <person name="Grant C."/>
            <person name="Kutyavin T."/>
            <person name="Levy R."/>
            <person name="Li M.-J."/>
            <person name="McClelland E."/>
            <person name="Palmieri A."/>
            <person name="Raymond C."/>
            <person name="Rouse G."/>
            <person name="Saenphimmachak C."/>
            <person name="Wu Z."/>
            <person name="Romero P."/>
            <person name="Gordon D."/>
            <person name="Zhang S."/>
            <person name="Yoo H."/>
            <person name="Tao Y."/>
            <person name="Biddle P."/>
            <person name="Jung M."/>
            <person name="Krespan W."/>
            <person name="Perry M."/>
            <person name="Gordon-Kamm B."/>
            <person name="Liao L."/>
            <person name="Kim S."/>
            <person name="Hendrick C."/>
            <person name="Zhao Z.-Y."/>
            <person name="Dolan M."/>
            <person name="Chumley F."/>
            <person name="Tingey S.V."/>
            <person name="Tomb J.-F."/>
            <person name="Gordon M.P."/>
            <person name="Olson M.V."/>
            <person name="Nester E.W."/>
        </authorList>
    </citation>
    <scope>NUCLEOTIDE SEQUENCE [LARGE SCALE GENOMIC DNA]</scope>
    <source>
        <strain>C58 / ATCC 33970</strain>
    </source>
</reference>
<reference key="2">
    <citation type="journal article" date="2001" name="Science">
        <title>Genome sequence of the plant pathogen and biotechnology agent Agrobacterium tumefaciens C58.</title>
        <authorList>
            <person name="Goodner B."/>
            <person name="Hinkle G."/>
            <person name="Gattung S."/>
            <person name="Miller N."/>
            <person name="Blanchard M."/>
            <person name="Qurollo B."/>
            <person name="Goldman B.S."/>
            <person name="Cao Y."/>
            <person name="Askenazi M."/>
            <person name="Halling C."/>
            <person name="Mullin L."/>
            <person name="Houmiel K."/>
            <person name="Gordon J."/>
            <person name="Vaudin M."/>
            <person name="Iartchouk O."/>
            <person name="Epp A."/>
            <person name="Liu F."/>
            <person name="Wollam C."/>
            <person name="Allinger M."/>
            <person name="Doughty D."/>
            <person name="Scott C."/>
            <person name="Lappas C."/>
            <person name="Markelz B."/>
            <person name="Flanagan C."/>
            <person name="Crowell C."/>
            <person name="Gurson J."/>
            <person name="Lomo C."/>
            <person name="Sear C."/>
            <person name="Strub G."/>
            <person name="Cielo C."/>
            <person name="Slater S."/>
        </authorList>
    </citation>
    <scope>NUCLEOTIDE SEQUENCE [LARGE SCALE GENOMIC DNA]</scope>
    <source>
        <strain>C58 / ATCC 33970</strain>
    </source>
</reference>
<protein>
    <recommendedName>
        <fullName evidence="1">Translation initiation factor IF-1</fullName>
    </recommendedName>
</protein>
<dbReference type="EMBL" id="AE007869">
    <property type="protein sequence ID" value="AAK86348.2"/>
    <property type="status" value="ALT_INIT"/>
    <property type="molecule type" value="Genomic_DNA"/>
</dbReference>
<dbReference type="PIR" id="AB2642">
    <property type="entry name" value="AB2642"/>
</dbReference>
<dbReference type="PIR" id="C97424">
    <property type="entry name" value="C97424"/>
</dbReference>
<dbReference type="RefSeq" id="NP_353563.2">
    <property type="nucleotide sequence ID" value="NC_003062.2"/>
</dbReference>
<dbReference type="RefSeq" id="WP_004432473.1">
    <property type="nucleotide sequence ID" value="NC_003062.2"/>
</dbReference>
<dbReference type="SMR" id="Q8UHX4"/>
<dbReference type="STRING" id="176299.Atu0534"/>
<dbReference type="EnsemblBacteria" id="AAK86348">
    <property type="protein sequence ID" value="AAK86348"/>
    <property type="gene ID" value="Atu0534"/>
</dbReference>
<dbReference type="GeneID" id="1132572"/>
<dbReference type="KEGG" id="atu:Atu0534"/>
<dbReference type="PATRIC" id="fig|176299.10.peg.532"/>
<dbReference type="eggNOG" id="COG0361">
    <property type="taxonomic scope" value="Bacteria"/>
</dbReference>
<dbReference type="HOGENOM" id="CLU_151267_0_2_5"/>
<dbReference type="OrthoDB" id="9803250at2"/>
<dbReference type="Proteomes" id="UP000000813">
    <property type="component" value="Chromosome circular"/>
</dbReference>
<dbReference type="GO" id="GO:0005829">
    <property type="term" value="C:cytosol"/>
    <property type="evidence" value="ECO:0007669"/>
    <property type="project" value="TreeGrafter"/>
</dbReference>
<dbReference type="GO" id="GO:0043022">
    <property type="term" value="F:ribosome binding"/>
    <property type="evidence" value="ECO:0007669"/>
    <property type="project" value="UniProtKB-UniRule"/>
</dbReference>
<dbReference type="GO" id="GO:0019843">
    <property type="term" value="F:rRNA binding"/>
    <property type="evidence" value="ECO:0007669"/>
    <property type="project" value="UniProtKB-UniRule"/>
</dbReference>
<dbReference type="GO" id="GO:0003743">
    <property type="term" value="F:translation initiation factor activity"/>
    <property type="evidence" value="ECO:0007669"/>
    <property type="project" value="UniProtKB-UniRule"/>
</dbReference>
<dbReference type="CDD" id="cd04451">
    <property type="entry name" value="S1_IF1"/>
    <property type="match status" value="1"/>
</dbReference>
<dbReference type="FunFam" id="2.40.50.140:FF:000002">
    <property type="entry name" value="Translation initiation factor IF-1"/>
    <property type="match status" value="1"/>
</dbReference>
<dbReference type="Gene3D" id="2.40.50.140">
    <property type="entry name" value="Nucleic acid-binding proteins"/>
    <property type="match status" value="1"/>
</dbReference>
<dbReference type="HAMAP" id="MF_00075">
    <property type="entry name" value="IF_1"/>
    <property type="match status" value="1"/>
</dbReference>
<dbReference type="InterPro" id="IPR012340">
    <property type="entry name" value="NA-bd_OB-fold"/>
</dbReference>
<dbReference type="InterPro" id="IPR006196">
    <property type="entry name" value="RNA-binding_domain_S1_IF1"/>
</dbReference>
<dbReference type="InterPro" id="IPR004368">
    <property type="entry name" value="TIF_IF1"/>
</dbReference>
<dbReference type="NCBIfam" id="TIGR00008">
    <property type="entry name" value="infA"/>
    <property type="match status" value="1"/>
</dbReference>
<dbReference type="PANTHER" id="PTHR33370">
    <property type="entry name" value="TRANSLATION INITIATION FACTOR IF-1, CHLOROPLASTIC"/>
    <property type="match status" value="1"/>
</dbReference>
<dbReference type="PANTHER" id="PTHR33370:SF1">
    <property type="entry name" value="TRANSLATION INITIATION FACTOR IF-1, CHLOROPLASTIC"/>
    <property type="match status" value="1"/>
</dbReference>
<dbReference type="Pfam" id="PF01176">
    <property type="entry name" value="eIF-1a"/>
    <property type="match status" value="1"/>
</dbReference>
<dbReference type="SUPFAM" id="SSF50249">
    <property type="entry name" value="Nucleic acid-binding proteins"/>
    <property type="match status" value="1"/>
</dbReference>
<dbReference type="PROSITE" id="PS50832">
    <property type="entry name" value="S1_IF1_TYPE"/>
    <property type="match status" value="1"/>
</dbReference>
<feature type="chain" id="PRO_0000095725" description="Translation initiation factor IF-1">
    <location>
        <begin position="1"/>
        <end position="72"/>
    </location>
</feature>
<feature type="domain" description="S1-like" evidence="1">
    <location>
        <begin position="1"/>
        <end position="72"/>
    </location>
</feature>
<sequence>MTKEEVLEFPGIVTELLPNATFRVKLENEHEIIAHTAGRMRKNRIRVLAGDKVLVEMTPYDLTKGRITYRFK</sequence>
<evidence type="ECO:0000255" key="1">
    <source>
        <dbReference type="HAMAP-Rule" id="MF_00075"/>
    </source>
</evidence>
<evidence type="ECO:0000305" key="2"/>
<proteinExistence type="inferred from homology"/>
<gene>
    <name evidence="1" type="primary">infA</name>
    <name type="ordered locus">Atu0534</name>
    <name type="ORF">AGR_C_945</name>
</gene>
<keyword id="KW-0963">Cytoplasm</keyword>
<keyword id="KW-0396">Initiation factor</keyword>
<keyword id="KW-0648">Protein biosynthesis</keyword>
<keyword id="KW-1185">Reference proteome</keyword>
<keyword id="KW-0694">RNA-binding</keyword>
<keyword id="KW-0699">rRNA-binding</keyword>
<name>IF1_AGRFC</name>
<organism>
    <name type="scientific">Agrobacterium fabrum (strain C58 / ATCC 33970)</name>
    <name type="common">Agrobacterium tumefaciens (strain C58)</name>
    <dbReference type="NCBI Taxonomy" id="176299"/>
    <lineage>
        <taxon>Bacteria</taxon>
        <taxon>Pseudomonadati</taxon>
        <taxon>Pseudomonadota</taxon>
        <taxon>Alphaproteobacteria</taxon>
        <taxon>Hyphomicrobiales</taxon>
        <taxon>Rhizobiaceae</taxon>
        <taxon>Rhizobium/Agrobacterium group</taxon>
        <taxon>Agrobacterium</taxon>
        <taxon>Agrobacterium tumefaciens complex</taxon>
    </lineage>
</organism>